<dbReference type="EMBL" id="CP000627">
    <property type="protein sequence ID" value="ABQ21714.1"/>
    <property type="molecule type" value="Genomic_DNA"/>
</dbReference>
<dbReference type="EMBL" id="CP001235">
    <property type="protein sequence ID" value="ACP08681.1"/>
    <property type="molecule type" value="Genomic_DNA"/>
</dbReference>
<dbReference type="RefSeq" id="WP_000055654.1">
    <property type="nucleotide sequence ID" value="NZ_JAACZH010000006.1"/>
</dbReference>
<dbReference type="SMR" id="A5F929"/>
<dbReference type="GeneID" id="89515201"/>
<dbReference type="KEGG" id="vco:VC0395_A0177"/>
<dbReference type="KEGG" id="vcr:VC395_0663"/>
<dbReference type="PATRIC" id="fig|345073.21.peg.644"/>
<dbReference type="eggNOG" id="COG0184">
    <property type="taxonomic scope" value="Bacteria"/>
</dbReference>
<dbReference type="HOGENOM" id="CLU_148518_0_0_6"/>
<dbReference type="OrthoDB" id="9799262at2"/>
<dbReference type="Proteomes" id="UP000000249">
    <property type="component" value="Chromosome 2"/>
</dbReference>
<dbReference type="GO" id="GO:0022627">
    <property type="term" value="C:cytosolic small ribosomal subunit"/>
    <property type="evidence" value="ECO:0007669"/>
    <property type="project" value="TreeGrafter"/>
</dbReference>
<dbReference type="GO" id="GO:0019843">
    <property type="term" value="F:rRNA binding"/>
    <property type="evidence" value="ECO:0007669"/>
    <property type="project" value="UniProtKB-UniRule"/>
</dbReference>
<dbReference type="GO" id="GO:0003735">
    <property type="term" value="F:structural constituent of ribosome"/>
    <property type="evidence" value="ECO:0007669"/>
    <property type="project" value="InterPro"/>
</dbReference>
<dbReference type="GO" id="GO:0006412">
    <property type="term" value="P:translation"/>
    <property type="evidence" value="ECO:0007669"/>
    <property type="project" value="UniProtKB-UniRule"/>
</dbReference>
<dbReference type="CDD" id="cd00353">
    <property type="entry name" value="Ribosomal_S15p_S13e"/>
    <property type="match status" value="1"/>
</dbReference>
<dbReference type="FunFam" id="1.10.287.10:FF:000002">
    <property type="entry name" value="30S ribosomal protein S15"/>
    <property type="match status" value="1"/>
</dbReference>
<dbReference type="Gene3D" id="6.10.250.3130">
    <property type="match status" value="1"/>
</dbReference>
<dbReference type="Gene3D" id="1.10.287.10">
    <property type="entry name" value="S15/NS1, RNA-binding"/>
    <property type="match status" value="1"/>
</dbReference>
<dbReference type="HAMAP" id="MF_01343_B">
    <property type="entry name" value="Ribosomal_uS15_B"/>
    <property type="match status" value="1"/>
</dbReference>
<dbReference type="InterPro" id="IPR000589">
    <property type="entry name" value="Ribosomal_uS15"/>
</dbReference>
<dbReference type="InterPro" id="IPR005290">
    <property type="entry name" value="Ribosomal_uS15_bac-type"/>
</dbReference>
<dbReference type="InterPro" id="IPR009068">
    <property type="entry name" value="uS15_NS1_RNA-bd_sf"/>
</dbReference>
<dbReference type="NCBIfam" id="TIGR00952">
    <property type="entry name" value="S15_bact"/>
    <property type="match status" value="1"/>
</dbReference>
<dbReference type="PANTHER" id="PTHR23321">
    <property type="entry name" value="RIBOSOMAL PROTEIN S15, BACTERIAL AND ORGANELLAR"/>
    <property type="match status" value="1"/>
</dbReference>
<dbReference type="PANTHER" id="PTHR23321:SF26">
    <property type="entry name" value="SMALL RIBOSOMAL SUBUNIT PROTEIN US15M"/>
    <property type="match status" value="1"/>
</dbReference>
<dbReference type="Pfam" id="PF00312">
    <property type="entry name" value="Ribosomal_S15"/>
    <property type="match status" value="1"/>
</dbReference>
<dbReference type="SMART" id="SM01387">
    <property type="entry name" value="Ribosomal_S15"/>
    <property type="match status" value="1"/>
</dbReference>
<dbReference type="SUPFAM" id="SSF47060">
    <property type="entry name" value="S15/NS1 RNA-binding domain"/>
    <property type="match status" value="1"/>
</dbReference>
<dbReference type="PROSITE" id="PS00362">
    <property type="entry name" value="RIBOSOMAL_S15"/>
    <property type="match status" value="1"/>
</dbReference>
<protein>
    <recommendedName>
        <fullName evidence="1">Small ribosomal subunit protein uS15</fullName>
    </recommendedName>
    <alternativeName>
        <fullName evidence="2">30S ribosomal protein S15</fullName>
    </alternativeName>
</protein>
<feature type="chain" id="PRO_1000073339" description="Small ribosomal subunit protein uS15">
    <location>
        <begin position="1"/>
        <end position="89"/>
    </location>
</feature>
<name>RS15_VIBC3</name>
<sequence length="89" mass="10126">MSLNAETKAAIVAEYARCENDTGSPEVQIALLTASINHLQGHFQAHKGDHHSRRGLLRMVSSRRKLLDYLKGKDLSRYQDLIKRLGLRR</sequence>
<keyword id="KW-0687">Ribonucleoprotein</keyword>
<keyword id="KW-0689">Ribosomal protein</keyword>
<keyword id="KW-0694">RNA-binding</keyword>
<keyword id="KW-0699">rRNA-binding</keyword>
<accession>A5F929</accession>
<accession>C3LXV7</accession>
<reference key="1">
    <citation type="submission" date="2007-03" db="EMBL/GenBank/DDBJ databases">
        <authorList>
            <person name="Heidelberg J."/>
        </authorList>
    </citation>
    <scope>NUCLEOTIDE SEQUENCE [LARGE SCALE GENOMIC DNA]</scope>
    <source>
        <strain>ATCC 39541 / Classical Ogawa 395 / O395</strain>
    </source>
</reference>
<reference key="2">
    <citation type="journal article" date="2008" name="PLoS ONE">
        <title>A recalibrated molecular clock and independent origins for the cholera pandemic clones.</title>
        <authorList>
            <person name="Feng L."/>
            <person name="Reeves P.R."/>
            <person name="Lan R."/>
            <person name="Ren Y."/>
            <person name="Gao C."/>
            <person name="Zhou Z."/>
            <person name="Ren Y."/>
            <person name="Cheng J."/>
            <person name="Wang W."/>
            <person name="Wang J."/>
            <person name="Qian W."/>
            <person name="Li D."/>
            <person name="Wang L."/>
        </authorList>
    </citation>
    <scope>NUCLEOTIDE SEQUENCE [LARGE SCALE GENOMIC DNA]</scope>
    <source>
        <strain>ATCC 39541 / Classical Ogawa 395 / O395</strain>
    </source>
</reference>
<organism>
    <name type="scientific">Vibrio cholerae serotype O1 (strain ATCC 39541 / Classical Ogawa 395 / O395)</name>
    <dbReference type="NCBI Taxonomy" id="345073"/>
    <lineage>
        <taxon>Bacteria</taxon>
        <taxon>Pseudomonadati</taxon>
        <taxon>Pseudomonadota</taxon>
        <taxon>Gammaproteobacteria</taxon>
        <taxon>Vibrionales</taxon>
        <taxon>Vibrionaceae</taxon>
        <taxon>Vibrio</taxon>
    </lineage>
</organism>
<proteinExistence type="inferred from homology"/>
<gene>
    <name evidence="1" type="primary">rpsO</name>
    <name type="ordered locus">VC0395_A0177</name>
    <name type="ordered locus">VC395_0663</name>
</gene>
<comment type="function">
    <text evidence="1">One of the primary rRNA binding proteins, it binds directly to 16S rRNA where it helps nucleate assembly of the platform of the 30S subunit by binding and bridging several RNA helices of the 16S rRNA.</text>
</comment>
<comment type="function">
    <text evidence="1">Forms an intersubunit bridge (bridge B4) with the 23S rRNA of the 50S subunit in the ribosome.</text>
</comment>
<comment type="subunit">
    <text evidence="1">Part of the 30S ribosomal subunit. Forms a bridge to the 50S subunit in the 70S ribosome, contacting the 23S rRNA.</text>
</comment>
<comment type="similarity">
    <text evidence="1">Belongs to the universal ribosomal protein uS15 family.</text>
</comment>
<evidence type="ECO:0000255" key="1">
    <source>
        <dbReference type="HAMAP-Rule" id="MF_01343"/>
    </source>
</evidence>
<evidence type="ECO:0000305" key="2"/>